<keyword id="KW-0539">Nucleus</keyword>
<keyword id="KW-1185">Reference proteome</keyword>
<keyword id="KW-0687">Ribonucleoprotein</keyword>
<keyword id="KW-0690">Ribosome biogenesis</keyword>
<keyword id="KW-0698">rRNA processing</keyword>
<accession>A7TIZ1</accession>
<dbReference type="EMBL" id="DS480398">
    <property type="protein sequence ID" value="EDO17803.1"/>
    <property type="molecule type" value="Genomic_DNA"/>
</dbReference>
<dbReference type="RefSeq" id="XP_001645661.1">
    <property type="nucleotide sequence ID" value="XM_001645611.1"/>
</dbReference>
<dbReference type="SMR" id="A7TIZ1"/>
<dbReference type="FunCoup" id="A7TIZ1">
    <property type="interactions" value="1290"/>
</dbReference>
<dbReference type="STRING" id="436907.A7TIZ1"/>
<dbReference type="GeneID" id="5546056"/>
<dbReference type="KEGG" id="vpo:Kpol_541p45"/>
<dbReference type="eggNOG" id="KOG3163">
    <property type="taxonomic scope" value="Eukaryota"/>
</dbReference>
<dbReference type="HOGENOM" id="CLU_1070048_0_0_1"/>
<dbReference type="InParanoid" id="A7TIZ1"/>
<dbReference type="OMA" id="TNTPEND"/>
<dbReference type="OrthoDB" id="1847590at2759"/>
<dbReference type="PhylomeDB" id="A7TIZ1"/>
<dbReference type="Proteomes" id="UP000000267">
    <property type="component" value="Unassembled WGS sequence"/>
</dbReference>
<dbReference type="GO" id="GO:0005730">
    <property type="term" value="C:nucleolus"/>
    <property type="evidence" value="ECO:0007669"/>
    <property type="project" value="UniProtKB-SubCell"/>
</dbReference>
<dbReference type="GO" id="GO:0030687">
    <property type="term" value="C:preribosome, large subunit precursor"/>
    <property type="evidence" value="ECO:0007669"/>
    <property type="project" value="EnsemblFungi"/>
</dbReference>
<dbReference type="GO" id="GO:0000466">
    <property type="term" value="P:maturation of 5.8S rRNA from tricistronic rRNA transcript (SSU-rRNA, 5.8S rRNA, LSU-rRNA)"/>
    <property type="evidence" value="ECO:0007669"/>
    <property type="project" value="EnsemblFungi"/>
</dbReference>
<dbReference type="GO" id="GO:0000463">
    <property type="term" value="P:maturation of LSU-rRNA from tricistronic rRNA transcript (SSU-rRNA, 5.8S rRNA, LSU-rRNA)"/>
    <property type="evidence" value="ECO:0007669"/>
    <property type="project" value="EnsemblFungi"/>
</dbReference>
<dbReference type="CDD" id="cd11381">
    <property type="entry name" value="NSA2"/>
    <property type="match status" value="1"/>
</dbReference>
<dbReference type="FunFam" id="2.40.10.310:FF:000001">
    <property type="entry name" value="NSA2, ribosome biogenesis homolog"/>
    <property type="match status" value="1"/>
</dbReference>
<dbReference type="Gene3D" id="2.40.10.310">
    <property type="match status" value="1"/>
</dbReference>
<dbReference type="InterPro" id="IPR039411">
    <property type="entry name" value="NSA2_fam"/>
</dbReference>
<dbReference type="InterPro" id="IPR022309">
    <property type="entry name" value="Ribosomal_Se8/biogenesis_NSA2"/>
</dbReference>
<dbReference type="PANTHER" id="PTHR12642">
    <property type="entry name" value="RIBOSOME BIOGENESIS PROTEIN NSA2 HOMOLOG"/>
    <property type="match status" value="1"/>
</dbReference>
<dbReference type="Pfam" id="PF01201">
    <property type="entry name" value="Ribosomal_S8e"/>
    <property type="match status" value="1"/>
</dbReference>
<evidence type="ECO:0000250" key="1"/>
<evidence type="ECO:0000250" key="2">
    <source>
        <dbReference type="UniProtKB" id="P40078"/>
    </source>
</evidence>
<evidence type="ECO:0000255" key="3">
    <source>
        <dbReference type="PROSITE-ProRule" id="PRU00768"/>
    </source>
</evidence>
<evidence type="ECO:0000256" key="4">
    <source>
        <dbReference type="SAM" id="MobiDB-lite"/>
    </source>
</evidence>
<evidence type="ECO:0000305" key="5"/>
<name>NSA2_VANPO</name>
<feature type="chain" id="PRO_0000320426" description="Ribosome biogenesis protein NSA2">
    <location>
        <begin position="1"/>
        <end position="261"/>
    </location>
</feature>
<feature type="region of interest" description="Disordered" evidence="4">
    <location>
        <begin position="1"/>
        <end position="35"/>
    </location>
</feature>
<feature type="region of interest" description="Disordered" evidence="4">
    <location>
        <begin position="61"/>
        <end position="84"/>
    </location>
</feature>
<feature type="short sequence motif" description="Nuclear localization signal 1" evidence="3">
    <location>
        <begin position="15"/>
        <end position="22"/>
    </location>
</feature>
<feature type="short sequence motif" description="Nuclear localization signal 2" evidence="3">
    <location>
        <begin position="51"/>
        <end position="58"/>
    </location>
</feature>
<feature type="compositionally biased region" description="Basic and acidic residues" evidence="4">
    <location>
        <begin position="7"/>
        <end position="35"/>
    </location>
</feature>
<proteinExistence type="inferred from homology"/>
<organism>
    <name type="scientific">Vanderwaltozyma polyspora (strain ATCC 22028 / DSM 70294 / BCRC 21397 / CBS 2163 / NBRC 10782 / NRRL Y-8283 / UCD 57-17)</name>
    <name type="common">Kluyveromyces polysporus</name>
    <dbReference type="NCBI Taxonomy" id="436907"/>
    <lineage>
        <taxon>Eukaryota</taxon>
        <taxon>Fungi</taxon>
        <taxon>Dikarya</taxon>
        <taxon>Ascomycota</taxon>
        <taxon>Saccharomycotina</taxon>
        <taxon>Saccharomycetes</taxon>
        <taxon>Saccharomycetales</taxon>
        <taxon>Saccharomycetaceae</taxon>
        <taxon>Vanderwaltozyma</taxon>
    </lineage>
</organism>
<sequence length="261" mass="29696">MPQNEYIEQHIKQHGRRLDHEERKRKREAREAHKISERAQKLTGWKGKQFAKKRYSEKVAMRKKIKAHEQSKVKGGSKPLDESGDALPTYLLDREQTNTAKAISSSIKQKRLEKADKFSVPLPKVRGISEEEMFKVVKTGKSKTKSWKRMITKHTFVGEGFTRRPVKMERIIRPSALRQKKANVTHPELGVTVFLPILSVKKNPQSPMYTQLGVLTKGTIIEVNVSELGMVTSGGKVVWGKYAQITNEPDRDGCVNAVLLV</sequence>
<reference key="1">
    <citation type="journal article" date="2007" name="Proc. Natl. Acad. Sci. U.S.A.">
        <title>Independent sorting-out of thousands of duplicated gene pairs in two yeast species descended from a whole-genome duplication.</title>
        <authorList>
            <person name="Scannell D.R."/>
            <person name="Frank A.C."/>
            <person name="Conant G.C."/>
            <person name="Byrne K.P."/>
            <person name="Woolfit M."/>
            <person name="Wolfe K.H."/>
        </authorList>
    </citation>
    <scope>NUCLEOTIDE SEQUENCE [LARGE SCALE GENOMIC DNA]</scope>
    <source>
        <strain>ATCC 22028 / DSM 70294 / BCRC 21397 / CBS 2163 / NBRC 10782 / NRRL Y-8283 / UCD 57-17</strain>
    </source>
</reference>
<protein>
    <recommendedName>
        <fullName>Ribosome biogenesis protein NSA2</fullName>
    </recommendedName>
</protein>
<gene>
    <name type="primary">NSA2</name>
    <name type="ORF">Kpol_541p45</name>
</gene>
<comment type="function">
    <text evidence="1">Involved in the biogenesis of the 60S ribosomal subunit. May play a part in the quality control of pre-60S particles (By similarity).</text>
</comment>
<comment type="subunit">
    <text evidence="2">Component of the pre-66S ribosomal particle. Interacts with NOP7 and RRP1. Interacts with RSA4 (via WD repeats).</text>
</comment>
<comment type="subcellular location">
    <subcellularLocation>
        <location evidence="1">Nucleus</location>
        <location evidence="1">Nucleolus</location>
    </subcellularLocation>
</comment>
<comment type="similarity">
    <text evidence="5">Belongs to the eukaryotic ribosomal protein eS8 family. Ribosome biogenesis protein NSA2 subfamily.</text>
</comment>